<evidence type="ECO:0000255" key="1">
    <source>
        <dbReference type="HAMAP-Rule" id="MF_00675"/>
    </source>
</evidence>
<keyword id="KW-0413">Isomerase</keyword>
<protein>
    <recommendedName>
        <fullName evidence="1">Uronate isomerase</fullName>
        <ecNumber evidence="1">5.3.1.12</ecNumber>
    </recommendedName>
    <alternativeName>
        <fullName evidence="1">Glucuronate isomerase</fullName>
    </alternativeName>
    <alternativeName>
        <fullName evidence="1">Uronic isomerase</fullName>
    </alternativeName>
</protein>
<name>UXAC_ECODH</name>
<organism>
    <name type="scientific">Escherichia coli (strain K12 / DH10B)</name>
    <dbReference type="NCBI Taxonomy" id="316385"/>
    <lineage>
        <taxon>Bacteria</taxon>
        <taxon>Pseudomonadati</taxon>
        <taxon>Pseudomonadota</taxon>
        <taxon>Gammaproteobacteria</taxon>
        <taxon>Enterobacterales</taxon>
        <taxon>Enterobacteriaceae</taxon>
        <taxon>Escherichia</taxon>
    </lineage>
</organism>
<gene>
    <name evidence="1" type="primary">uxaC</name>
    <name type="ordered locus">ECDH10B_3268</name>
</gene>
<accession>B1XG96</accession>
<comment type="catalytic activity">
    <reaction evidence="1">
        <text>D-glucuronate = D-fructuronate</text>
        <dbReference type="Rhea" id="RHEA:13049"/>
        <dbReference type="ChEBI" id="CHEBI:58720"/>
        <dbReference type="ChEBI" id="CHEBI:59863"/>
        <dbReference type="EC" id="5.3.1.12"/>
    </reaction>
</comment>
<comment type="catalytic activity">
    <reaction evidence="1">
        <text>aldehydo-D-galacturonate = keto-D-tagaturonate</text>
        <dbReference type="Rhea" id="RHEA:27702"/>
        <dbReference type="ChEBI" id="CHEBI:12952"/>
        <dbReference type="ChEBI" id="CHEBI:17886"/>
        <dbReference type="EC" id="5.3.1.12"/>
    </reaction>
</comment>
<comment type="pathway">
    <text evidence="1">Carbohydrate metabolism; pentose and glucuronate interconversion.</text>
</comment>
<comment type="similarity">
    <text evidence="1">Belongs to the metallo-dependent hydrolases superfamily. Uronate isomerase family.</text>
</comment>
<proteinExistence type="inferred from homology"/>
<sequence length="470" mass="53987">MTPFMTEDFLLDTEFARRLYHDYAKDQPIFDYHCHLPPQQIAEDYRFKNLYDIWLKGDHYKWRAMRTNGVAERLCTGDASDREKFDAWAATVPHTIGNPLYHWTHLELRRPFGITGKLLSPSTADEIWNECNELLAQDNFSARGIMQQMNVKMVGTTDDPIDSLEHHAEIAKDGSFTIKVLPSWRPDKAFNIEQATFNDYMAKLGEVSDTDIRRFADLQTALTKRLDHFAAHGCKVSDHALDVVMFAEANEAELDSILARRLAGETLSEHEVAQFKTAVLVFLGAEYARRGWVQQYHIGALRNNNLRQFKLLGPDVGFDSINDRPMAEELSKLLSKQNEENLLPKTILYCLNPRDNEVLGTMIGNFQGEGMPGKMQFGSGWWFNDQKDGMERQMTQLAQLGLLSRFVGMLTDSRSFLSYTRHEYFRRILCQMIGRWVEAGEAPADINLLGEMVKNICFNNARDYFAIELN</sequence>
<reference key="1">
    <citation type="journal article" date="2008" name="J. Bacteriol.">
        <title>The complete genome sequence of Escherichia coli DH10B: insights into the biology of a laboratory workhorse.</title>
        <authorList>
            <person name="Durfee T."/>
            <person name="Nelson R."/>
            <person name="Baldwin S."/>
            <person name="Plunkett G. III"/>
            <person name="Burland V."/>
            <person name="Mau B."/>
            <person name="Petrosino J.F."/>
            <person name="Qin X."/>
            <person name="Muzny D.M."/>
            <person name="Ayele M."/>
            <person name="Gibbs R.A."/>
            <person name="Csorgo B."/>
            <person name="Posfai G."/>
            <person name="Weinstock G.M."/>
            <person name="Blattner F.R."/>
        </authorList>
    </citation>
    <scope>NUCLEOTIDE SEQUENCE [LARGE SCALE GENOMIC DNA]</scope>
    <source>
        <strain>K12 / DH10B</strain>
    </source>
</reference>
<dbReference type="EC" id="5.3.1.12" evidence="1"/>
<dbReference type="EMBL" id="CP000948">
    <property type="protein sequence ID" value="ACB04176.1"/>
    <property type="molecule type" value="Genomic_DNA"/>
</dbReference>
<dbReference type="RefSeq" id="WP_000187442.1">
    <property type="nucleotide sequence ID" value="NC_010473.1"/>
</dbReference>
<dbReference type="SMR" id="B1XG96"/>
<dbReference type="GeneID" id="93778895"/>
<dbReference type="KEGG" id="ecd:ECDH10B_3268"/>
<dbReference type="HOGENOM" id="CLU_044465_1_0_6"/>
<dbReference type="UniPathway" id="UPA00246"/>
<dbReference type="GO" id="GO:0008880">
    <property type="term" value="F:glucuronate isomerase activity"/>
    <property type="evidence" value="ECO:0007669"/>
    <property type="project" value="UniProtKB-UniRule"/>
</dbReference>
<dbReference type="GO" id="GO:0019698">
    <property type="term" value="P:D-galacturonate catabolic process"/>
    <property type="evidence" value="ECO:0007669"/>
    <property type="project" value="TreeGrafter"/>
</dbReference>
<dbReference type="GO" id="GO:0042840">
    <property type="term" value="P:D-glucuronate catabolic process"/>
    <property type="evidence" value="ECO:0007669"/>
    <property type="project" value="TreeGrafter"/>
</dbReference>
<dbReference type="FunFam" id="1.10.2020.10:FF:000001">
    <property type="entry name" value="Uronate isomerase"/>
    <property type="match status" value="1"/>
</dbReference>
<dbReference type="Gene3D" id="3.20.20.140">
    <property type="entry name" value="Metal-dependent hydrolases"/>
    <property type="match status" value="1"/>
</dbReference>
<dbReference type="Gene3D" id="1.10.2020.10">
    <property type="entry name" value="uronate isomerase, domain 2, chain A"/>
    <property type="match status" value="1"/>
</dbReference>
<dbReference type="HAMAP" id="MF_00675">
    <property type="entry name" value="UxaC"/>
    <property type="match status" value="1"/>
</dbReference>
<dbReference type="InterPro" id="IPR032466">
    <property type="entry name" value="Metal_Hydrolase"/>
</dbReference>
<dbReference type="InterPro" id="IPR003766">
    <property type="entry name" value="Uronate_isomerase"/>
</dbReference>
<dbReference type="NCBIfam" id="NF002794">
    <property type="entry name" value="PRK02925.1"/>
    <property type="match status" value="1"/>
</dbReference>
<dbReference type="PANTHER" id="PTHR30068">
    <property type="entry name" value="URONATE ISOMERASE"/>
    <property type="match status" value="1"/>
</dbReference>
<dbReference type="PANTHER" id="PTHR30068:SF4">
    <property type="entry name" value="URONATE ISOMERASE"/>
    <property type="match status" value="1"/>
</dbReference>
<dbReference type="Pfam" id="PF02614">
    <property type="entry name" value="UxaC"/>
    <property type="match status" value="1"/>
</dbReference>
<dbReference type="SUPFAM" id="SSF51556">
    <property type="entry name" value="Metallo-dependent hydrolases"/>
    <property type="match status" value="1"/>
</dbReference>
<feature type="chain" id="PRO_1000131592" description="Uronate isomerase">
    <location>
        <begin position="1"/>
        <end position="470"/>
    </location>
</feature>